<proteinExistence type="inferred from homology"/>
<comment type="function">
    <text>Involved in gametogenesis and steroidogenesis.</text>
</comment>
<comment type="subunit">
    <text>Heterodimer of an alpha and a beta chain.</text>
</comment>
<comment type="subcellular location">
    <subcellularLocation>
        <location>Secreted</location>
    </subcellularLocation>
</comment>
<comment type="similarity">
    <text evidence="3">Belongs to the glycoprotein hormones subunit alpha family.</text>
</comment>
<name>GLHA2_ONCTS</name>
<evidence type="ECO:0000250" key="1"/>
<evidence type="ECO:0000255" key="2"/>
<evidence type="ECO:0000305" key="3"/>
<gene>
    <name type="primary">cgab</name>
</gene>
<keyword id="KW-1015">Disulfide bond</keyword>
<keyword id="KW-0325">Glycoprotein</keyword>
<keyword id="KW-0372">Hormone</keyword>
<keyword id="KW-1185">Reference proteome</keyword>
<keyword id="KW-0964">Secreted</keyword>
<keyword id="KW-0732">Signal</keyword>
<sequence>MCLLKSTGLSLILSALLVIADSYPNSDKTNMGCEECTLKPNTIFPNIMQCTGCCFSRAYPTPLRSKQTMLVPKNITSEATCCVAKEGERVTTKDGFPVTNHTECHCSTCYYHKS</sequence>
<accession>P69062</accession>
<accession>P13153</accession>
<reference key="1">
    <citation type="journal article" date="1995" name="Mol. Mar. Biol. Biotechnol.">
        <title>A gene encoding chinook salmon (Oncorhynchus tschawytscha) gonadotropin alpha subunit: gene structure and promoter analysis in primary pituitary cells.</title>
        <authorList>
            <person name="Suzuki K."/>
            <person name="Liu D."/>
            <person name="Hew C.-L."/>
        </authorList>
    </citation>
    <scope>NUCLEOTIDE SEQUENCE [GENOMIC DNA / MRNA]</scope>
</reference>
<protein>
    <recommendedName>
        <fullName>Glycoprotein hormones alpha chain 2</fullName>
    </recommendedName>
    <alternativeName>
        <fullName>GTH-alpha</fullName>
    </alternativeName>
    <alternativeName>
        <fullName>Gonadotropin 2 alpha chain</fullName>
    </alternativeName>
</protein>
<dbReference type="EMBL" id="S77061">
    <property type="protein sequence ID" value="AAB34359.1"/>
    <property type="molecule type" value="Genomic_DNA"/>
</dbReference>
<dbReference type="EMBL" id="S77059">
    <property type="protein sequence ID" value="AAB34358.1"/>
    <property type="molecule type" value="mRNA"/>
</dbReference>
<dbReference type="SMR" id="P69062"/>
<dbReference type="GlyCosmos" id="P69062">
    <property type="glycosylation" value="2 sites, No reported glycans"/>
</dbReference>
<dbReference type="Proteomes" id="UP000694402">
    <property type="component" value="Unplaced"/>
</dbReference>
<dbReference type="GO" id="GO:0005615">
    <property type="term" value="C:extracellular space"/>
    <property type="evidence" value="ECO:0007669"/>
    <property type="project" value="TreeGrafter"/>
</dbReference>
<dbReference type="GO" id="GO:0016914">
    <property type="term" value="C:follicle-stimulating hormone complex"/>
    <property type="evidence" value="ECO:0007669"/>
    <property type="project" value="TreeGrafter"/>
</dbReference>
<dbReference type="GO" id="GO:0016913">
    <property type="term" value="F:follicle-stimulating hormone activity"/>
    <property type="evidence" value="ECO:0007669"/>
    <property type="project" value="TreeGrafter"/>
</dbReference>
<dbReference type="GO" id="GO:0010893">
    <property type="term" value="P:positive regulation of steroid biosynthetic process"/>
    <property type="evidence" value="ECO:0007669"/>
    <property type="project" value="TreeGrafter"/>
</dbReference>
<dbReference type="GO" id="GO:0006590">
    <property type="term" value="P:thyroid hormone generation"/>
    <property type="evidence" value="ECO:0007669"/>
    <property type="project" value="TreeGrafter"/>
</dbReference>
<dbReference type="FunFam" id="2.10.90.10:FF:000011">
    <property type="entry name" value="Glycoprotein hormones alpha chain"/>
    <property type="match status" value="1"/>
</dbReference>
<dbReference type="Gene3D" id="2.10.90.10">
    <property type="entry name" value="Cystine-knot cytokines"/>
    <property type="match status" value="1"/>
</dbReference>
<dbReference type="InterPro" id="IPR029034">
    <property type="entry name" value="Cystine-knot_cytokine"/>
</dbReference>
<dbReference type="InterPro" id="IPR000476">
    <property type="entry name" value="Glyco_hormone"/>
</dbReference>
<dbReference type="PANTHER" id="PTHR11509">
    <property type="entry name" value="GLYCOPROTEIN HORMONE ALPHA CHAIN"/>
    <property type="match status" value="1"/>
</dbReference>
<dbReference type="PANTHER" id="PTHR11509:SF0">
    <property type="entry name" value="GLYCOPROTEIN HORMONES ALPHA CHAIN"/>
    <property type="match status" value="1"/>
</dbReference>
<dbReference type="Pfam" id="PF00236">
    <property type="entry name" value="Hormone_6"/>
    <property type="match status" value="1"/>
</dbReference>
<dbReference type="PRINTS" id="PR00274">
    <property type="entry name" value="GLYCOHORMONE"/>
</dbReference>
<dbReference type="SMART" id="SM00067">
    <property type="entry name" value="GHA"/>
    <property type="match status" value="1"/>
</dbReference>
<dbReference type="SUPFAM" id="SSF57501">
    <property type="entry name" value="Cystine-knot cytokines"/>
    <property type="match status" value="1"/>
</dbReference>
<dbReference type="PROSITE" id="PS00779">
    <property type="entry name" value="GLYCO_HORMONE_ALPHA_1"/>
    <property type="match status" value="1"/>
</dbReference>
<dbReference type="PROSITE" id="PS00780">
    <property type="entry name" value="GLYCO_HORMONE_ALPHA_2"/>
    <property type="match status" value="1"/>
</dbReference>
<dbReference type="PROSITE" id="PS50277">
    <property type="entry name" value="GLYCO_HORMONE_ALPHA_3"/>
    <property type="match status" value="1"/>
</dbReference>
<organism>
    <name type="scientific">Oncorhynchus tshawytscha</name>
    <name type="common">Chinook salmon</name>
    <name type="synonym">Salmo tshawytscha</name>
    <dbReference type="NCBI Taxonomy" id="74940"/>
    <lineage>
        <taxon>Eukaryota</taxon>
        <taxon>Metazoa</taxon>
        <taxon>Chordata</taxon>
        <taxon>Craniata</taxon>
        <taxon>Vertebrata</taxon>
        <taxon>Euteleostomi</taxon>
        <taxon>Actinopterygii</taxon>
        <taxon>Neopterygii</taxon>
        <taxon>Teleostei</taxon>
        <taxon>Protacanthopterygii</taxon>
        <taxon>Salmoniformes</taxon>
        <taxon>Salmonidae</taxon>
        <taxon>Salmoninae</taxon>
        <taxon>Oncorhynchus</taxon>
    </lineage>
</organism>
<feature type="signal peptide">
    <location>
        <begin position="1"/>
        <end position="22"/>
    </location>
</feature>
<feature type="chain" id="PRO_0000011671" description="Glycoprotein hormones alpha chain 2">
    <location>
        <begin position="23"/>
        <end position="114"/>
    </location>
</feature>
<feature type="glycosylation site" description="N-linked (GlcNAc...) asparagine" evidence="2">
    <location>
        <position position="74"/>
    </location>
</feature>
<feature type="glycosylation site" description="N-linked (GlcNAc...) asparagine" evidence="2">
    <location>
        <position position="100"/>
    </location>
</feature>
<feature type="disulfide bond" evidence="1">
    <location>
        <begin position="33"/>
        <end position="53"/>
    </location>
</feature>
<feature type="disulfide bond" evidence="1">
    <location>
        <begin position="36"/>
        <end position="82"/>
    </location>
</feature>
<feature type="disulfide bond" evidence="1">
    <location>
        <begin position="50"/>
        <end position="104"/>
    </location>
</feature>
<feature type="disulfide bond" evidence="1">
    <location>
        <begin position="54"/>
        <end position="106"/>
    </location>
</feature>
<feature type="disulfide bond" evidence="1">
    <location>
        <begin position="81"/>
        <end position="109"/>
    </location>
</feature>